<feature type="chain" id="PRO_0000186525" description="PTS system glucose-specific EIICB component">
    <location>
        <begin position="1"/>
        <end position="477"/>
    </location>
</feature>
<feature type="transmembrane region" description="Helical" evidence="3">
    <location>
        <begin position="15"/>
        <end position="35"/>
    </location>
</feature>
<feature type="transmembrane region" description="Helical" evidence="3">
    <location>
        <begin position="51"/>
        <end position="71"/>
    </location>
</feature>
<feature type="transmembrane region" description="Helical" evidence="3">
    <location>
        <begin position="76"/>
        <end position="96"/>
    </location>
</feature>
<feature type="transmembrane region" description="Helical" evidence="3">
    <location>
        <begin position="112"/>
        <end position="132"/>
    </location>
</feature>
<feature type="transmembrane region" description="Helical" evidence="3">
    <location>
        <begin position="152"/>
        <end position="172"/>
    </location>
</feature>
<feature type="transmembrane region" description="Helical" evidence="3">
    <location>
        <begin position="191"/>
        <end position="211"/>
    </location>
</feature>
<feature type="transmembrane region" description="Helical" evidence="3">
    <location>
        <begin position="250"/>
        <end position="270"/>
    </location>
</feature>
<feature type="transmembrane region" description="Helical" evidence="3">
    <location>
        <begin position="280"/>
        <end position="300"/>
    </location>
</feature>
<feature type="transmembrane region" description="Helical" evidence="3">
    <location>
        <begin position="304"/>
        <end position="324"/>
    </location>
</feature>
<feature type="transmembrane region" description="Helical" evidence="3">
    <location>
        <begin position="357"/>
        <end position="377"/>
    </location>
</feature>
<feature type="domain" description="PTS EIIC type-1" evidence="3">
    <location>
        <begin position="1"/>
        <end position="388"/>
    </location>
</feature>
<feature type="domain" description="PTS EIIB type-1" evidence="2">
    <location>
        <begin position="399"/>
        <end position="477"/>
    </location>
</feature>
<feature type="active site" description="Phosphocysteine intermediate; for EIIB activity" evidence="1 2">
    <location>
        <position position="421"/>
    </location>
</feature>
<feature type="modified residue" description="Phosphocysteine" evidence="1">
    <location>
        <position position="421"/>
    </location>
</feature>
<accession>P57437</accession>
<dbReference type="EC" id="2.7.1.199" evidence="1"/>
<dbReference type="EMBL" id="BA000003">
    <property type="protein sequence ID" value="BAB13060.1"/>
    <property type="status" value="ALT_INIT"/>
    <property type="molecule type" value="Genomic_DNA"/>
</dbReference>
<dbReference type="RefSeq" id="NP_240174.2">
    <property type="nucleotide sequence ID" value="NC_002528.1"/>
</dbReference>
<dbReference type="RefSeq" id="WP_009874312.1">
    <property type="nucleotide sequence ID" value="NC_002528.1"/>
</dbReference>
<dbReference type="SMR" id="P57437"/>
<dbReference type="STRING" id="563178.BUAP5A_349"/>
<dbReference type="EnsemblBacteria" id="BAB13060">
    <property type="protein sequence ID" value="BAB13060"/>
    <property type="gene ID" value="BAB13060"/>
</dbReference>
<dbReference type="KEGG" id="buc:BU356"/>
<dbReference type="PATRIC" id="fig|107806.10.peg.369"/>
<dbReference type="eggNOG" id="COG1263">
    <property type="taxonomic scope" value="Bacteria"/>
</dbReference>
<dbReference type="eggNOG" id="COG1264">
    <property type="taxonomic scope" value="Bacteria"/>
</dbReference>
<dbReference type="HOGENOM" id="CLU_012312_1_0_6"/>
<dbReference type="Proteomes" id="UP000001806">
    <property type="component" value="Chromosome"/>
</dbReference>
<dbReference type="GO" id="GO:0005886">
    <property type="term" value="C:plasma membrane"/>
    <property type="evidence" value="ECO:0007669"/>
    <property type="project" value="UniProtKB-SubCell"/>
</dbReference>
<dbReference type="GO" id="GO:0055056">
    <property type="term" value="F:D-glucose transmembrane transporter activity"/>
    <property type="evidence" value="ECO:0007669"/>
    <property type="project" value="InterPro"/>
</dbReference>
<dbReference type="GO" id="GO:0016301">
    <property type="term" value="F:kinase activity"/>
    <property type="evidence" value="ECO:0007669"/>
    <property type="project" value="UniProtKB-KW"/>
</dbReference>
<dbReference type="GO" id="GO:0008982">
    <property type="term" value="F:protein-N(PI)-phosphohistidine-sugar phosphotransferase activity"/>
    <property type="evidence" value="ECO:0007669"/>
    <property type="project" value="InterPro"/>
</dbReference>
<dbReference type="GO" id="GO:0090564">
    <property type="term" value="F:protein-phosphocysteine-glucose phosphotransferase system transporter activity"/>
    <property type="evidence" value="ECO:0007669"/>
    <property type="project" value="TreeGrafter"/>
</dbReference>
<dbReference type="GO" id="GO:1904659">
    <property type="term" value="P:D-glucose transmembrane transport"/>
    <property type="evidence" value="ECO:0007669"/>
    <property type="project" value="InterPro"/>
</dbReference>
<dbReference type="GO" id="GO:0009401">
    <property type="term" value="P:phosphoenolpyruvate-dependent sugar phosphotransferase system"/>
    <property type="evidence" value="ECO:0007669"/>
    <property type="project" value="UniProtKB-KW"/>
</dbReference>
<dbReference type="CDD" id="cd00212">
    <property type="entry name" value="PTS_IIB_glc"/>
    <property type="match status" value="1"/>
</dbReference>
<dbReference type="FunFam" id="3.30.1360.60:FF:000001">
    <property type="entry name" value="PTS system glucose-specific IIBC component PtsG"/>
    <property type="match status" value="1"/>
</dbReference>
<dbReference type="Gene3D" id="3.30.1360.60">
    <property type="entry name" value="Glucose permease domain IIB"/>
    <property type="match status" value="1"/>
</dbReference>
<dbReference type="InterPro" id="IPR036878">
    <property type="entry name" value="Glu_permease_IIB"/>
</dbReference>
<dbReference type="InterPro" id="IPR018113">
    <property type="entry name" value="PTrfase_EIIB_Cys"/>
</dbReference>
<dbReference type="InterPro" id="IPR003352">
    <property type="entry name" value="PTS_EIIC"/>
</dbReference>
<dbReference type="InterPro" id="IPR013013">
    <property type="entry name" value="PTS_EIIC_1"/>
</dbReference>
<dbReference type="InterPro" id="IPR050429">
    <property type="entry name" value="PTS_Glucose_EIICBA"/>
</dbReference>
<dbReference type="InterPro" id="IPR001996">
    <property type="entry name" value="PTS_IIB_1"/>
</dbReference>
<dbReference type="InterPro" id="IPR011299">
    <property type="entry name" value="PTS_IIBC_glc"/>
</dbReference>
<dbReference type="NCBIfam" id="TIGR00826">
    <property type="entry name" value="EIIB_glc"/>
    <property type="match status" value="1"/>
</dbReference>
<dbReference type="NCBIfam" id="NF008301">
    <property type="entry name" value="PRK11089.1"/>
    <property type="match status" value="1"/>
</dbReference>
<dbReference type="NCBIfam" id="TIGR02002">
    <property type="entry name" value="PTS-II-BC-glcB"/>
    <property type="match status" value="1"/>
</dbReference>
<dbReference type="PANTHER" id="PTHR30009">
    <property type="entry name" value="CYTOCHROME C-TYPE SYNTHESIS PROTEIN AND PTS TRANSMEMBRANE COMPONENT"/>
    <property type="match status" value="1"/>
</dbReference>
<dbReference type="PANTHER" id="PTHR30009:SF20">
    <property type="entry name" value="PTS SYSTEM GLUCOSE-SPECIFIC EIICB COMPONENT-RELATED"/>
    <property type="match status" value="1"/>
</dbReference>
<dbReference type="Pfam" id="PF00367">
    <property type="entry name" value="PTS_EIIB"/>
    <property type="match status" value="1"/>
</dbReference>
<dbReference type="Pfam" id="PF02378">
    <property type="entry name" value="PTS_EIIC"/>
    <property type="match status" value="1"/>
</dbReference>
<dbReference type="SUPFAM" id="SSF55604">
    <property type="entry name" value="Glucose permease domain IIB"/>
    <property type="match status" value="1"/>
</dbReference>
<dbReference type="PROSITE" id="PS51098">
    <property type="entry name" value="PTS_EIIB_TYPE_1"/>
    <property type="match status" value="1"/>
</dbReference>
<dbReference type="PROSITE" id="PS01035">
    <property type="entry name" value="PTS_EIIB_TYPE_1_CYS"/>
    <property type="match status" value="1"/>
</dbReference>
<dbReference type="PROSITE" id="PS51103">
    <property type="entry name" value="PTS_EIIC_TYPE_1"/>
    <property type="match status" value="1"/>
</dbReference>
<proteinExistence type="inferred from homology"/>
<sequence length="477" mass="51727">MFKNVFANLQKVGKSLMLPVSVLPIAGILLGIGSAHFNFLPDILSQIMAQTGGSVFSNMPLIFAIGVALGFTNNDGVAALAAVVSYGILIQTLTAVEPIVLHTTIEVIKNKHLSDTGILGGIIAGAISAYMFNKFYRIQLPEYLGFFAGKRFVPIISGLSAILIGVILSLIWPPIGHGIQIFSKWAAYQNPILAFALYGLVERALVPFGLHHIWNVPFQMQIGEYTNSIGQVFHGDIARYMAGDSTAGNLSGGFIFKMYGLPGAALAIWHTSKKENKTKIGSIMISAALTAFLTGITEPIEFSFIIVAPVLYVIHAILAGLSFPLCIFLDMRAGTSFSHGFIDFIVLSGNSHHILLFPIIGILYGLLYYILFYLFIINFNLDTPGRENIKNNILEKDNNEIAPYIITALGGKNNIKNLDACITRLRITVSDISKVKQKDLKNIGAAGIIISGSGIQVVFGTRSENIKTAMDECIKNI</sequence>
<evidence type="ECO:0000250" key="1">
    <source>
        <dbReference type="UniProtKB" id="P69786"/>
    </source>
</evidence>
<evidence type="ECO:0000255" key="2">
    <source>
        <dbReference type="PROSITE-ProRule" id="PRU00421"/>
    </source>
</evidence>
<evidence type="ECO:0000255" key="3">
    <source>
        <dbReference type="PROSITE-ProRule" id="PRU00426"/>
    </source>
</evidence>
<evidence type="ECO:0000305" key="4"/>
<keyword id="KW-0997">Cell inner membrane</keyword>
<keyword id="KW-1003">Cell membrane</keyword>
<keyword id="KW-0418">Kinase</keyword>
<keyword id="KW-0472">Membrane</keyword>
<keyword id="KW-0597">Phosphoprotein</keyword>
<keyword id="KW-0598">Phosphotransferase system</keyword>
<keyword id="KW-1185">Reference proteome</keyword>
<keyword id="KW-0762">Sugar transport</keyword>
<keyword id="KW-0808">Transferase</keyword>
<keyword id="KW-0812">Transmembrane</keyword>
<keyword id="KW-1133">Transmembrane helix</keyword>
<keyword id="KW-0813">Transport</keyword>
<organism>
    <name type="scientific">Buchnera aphidicola subsp. Acyrthosiphon pisum (strain APS)</name>
    <name type="common">Acyrthosiphon pisum symbiotic bacterium</name>
    <dbReference type="NCBI Taxonomy" id="107806"/>
    <lineage>
        <taxon>Bacteria</taxon>
        <taxon>Pseudomonadati</taxon>
        <taxon>Pseudomonadota</taxon>
        <taxon>Gammaproteobacteria</taxon>
        <taxon>Enterobacterales</taxon>
        <taxon>Erwiniaceae</taxon>
        <taxon>Buchnera</taxon>
    </lineage>
</organism>
<protein>
    <recommendedName>
        <fullName evidence="1">PTS system glucose-specific EIICB component</fullName>
    </recommendedName>
    <alternativeName>
        <fullName evidence="1">EIICB-Glc</fullName>
        <shortName evidence="1">EII-Glc</shortName>
    </alternativeName>
    <domain>
        <recommendedName>
            <fullName evidence="1">Glucose permease IIC component</fullName>
        </recommendedName>
        <alternativeName>
            <fullName evidence="1">PTS system glucose-specific EIIC component</fullName>
        </alternativeName>
    </domain>
    <domain>
        <recommendedName>
            <fullName evidence="1">Glucose-specific phosphotransferase enzyme IIB component</fullName>
            <ecNumber evidence="1">2.7.1.199</ecNumber>
        </recommendedName>
        <alternativeName>
            <fullName evidence="1">PTS system glucose-specific EIIB component</fullName>
        </alternativeName>
    </domain>
</protein>
<reference key="1">
    <citation type="journal article" date="2000" name="Nature">
        <title>Genome sequence of the endocellular bacterial symbiont of aphids Buchnera sp. APS.</title>
        <authorList>
            <person name="Shigenobu S."/>
            <person name="Watanabe H."/>
            <person name="Hattori M."/>
            <person name="Sakaki Y."/>
            <person name="Ishikawa H."/>
        </authorList>
    </citation>
    <scope>NUCLEOTIDE SEQUENCE [LARGE SCALE GENOMIC DNA]</scope>
    <source>
        <strain>APS</strain>
    </source>
</reference>
<gene>
    <name type="primary">ptsG</name>
    <name type="ordered locus">BU356</name>
</gene>
<name>PTGCB_BUCAI</name>
<comment type="function">
    <text evidence="1">The phosphoenolpyruvate-dependent sugar phosphotransferase system (sugar PTS), a major carbohydrate active transport system, catalyzes the phosphorylation of incoming sugar substrates concomitantly with their translocation across the cell membrane. The enzyme II complex composed of PtsG and Crr is involved in glucose transport.</text>
</comment>
<comment type="catalytic activity">
    <reaction evidence="1">
        <text>N(pros)-phospho-L-histidyl-[protein] + D-glucose(out) = D-glucose 6-phosphate(in) + L-histidyl-[protein]</text>
        <dbReference type="Rhea" id="RHEA:33367"/>
        <dbReference type="Rhea" id="RHEA-COMP:9745"/>
        <dbReference type="Rhea" id="RHEA-COMP:9746"/>
        <dbReference type="ChEBI" id="CHEBI:4167"/>
        <dbReference type="ChEBI" id="CHEBI:29979"/>
        <dbReference type="ChEBI" id="CHEBI:61548"/>
        <dbReference type="ChEBI" id="CHEBI:64837"/>
        <dbReference type="EC" id="2.7.1.199"/>
    </reaction>
</comment>
<comment type="subcellular location">
    <subcellularLocation>
        <location evidence="3">Cell inner membrane</location>
        <topology evidence="3">Multi-pass membrane protein</topology>
    </subcellularLocation>
</comment>
<comment type="domain">
    <text evidence="2">The EIIB domain is phosphorylated by phospho-EIIA on a cysteinyl or histidyl residue, depending on the transported sugar. Then, it transfers the phosphoryl group to the sugar substrate concomitantly with the sugar uptake processed by the EIIC domain.</text>
</comment>
<comment type="domain">
    <text evidence="3">The EIIC domain forms the PTS system translocation channel and contains the specific substrate-binding site.</text>
</comment>
<comment type="sequence caution" evidence="4">
    <conflict type="erroneous initiation">
        <sequence resource="EMBL-CDS" id="BAB13060"/>
    </conflict>
</comment>